<keyword id="KW-0028">Amino-acid biosynthesis</keyword>
<keyword id="KW-0963">Cytoplasm</keyword>
<keyword id="KW-0220">Diaminopimelate biosynthesis</keyword>
<keyword id="KW-0457">Lysine biosynthesis</keyword>
<keyword id="KW-0520">NAD</keyword>
<keyword id="KW-0521">NADP</keyword>
<keyword id="KW-0560">Oxidoreductase</keyword>
<dbReference type="EC" id="1.17.1.8" evidence="1"/>
<dbReference type="EMBL" id="AM849034">
    <property type="protein sequence ID" value="CAQ01309.1"/>
    <property type="molecule type" value="Genomic_DNA"/>
</dbReference>
<dbReference type="RefSeq" id="WP_012298588.1">
    <property type="nucleotide sequence ID" value="NZ_MZMN01000003.1"/>
</dbReference>
<dbReference type="SMR" id="B0RGX5"/>
<dbReference type="STRING" id="31964.CMS1194"/>
<dbReference type="KEGG" id="cms:CMS1194"/>
<dbReference type="eggNOG" id="COG0289">
    <property type="taxonomic scope" value="Bacteria"/>
</dbReference>
<dbReference type="HOGENOM" id="CLU_047479_0_1_11"/>
<dbReference type="OrthoDB" id="9790352at2"/>
<dbReference type="UniPathway" id="UPA00034">
    <property type="reaction ID" value="UER00018"/>
</dbReference>
<dbReference type="Proteomes" id="UP000001318">
    <property type="component" value="Chromosome"/>
</dbReference>
<dbReference type="GO" id="GO:0005829">
    <property type="term" value="C:cytosol"/>
    <property type="evidence" value="ECO:0007669"/>
    <property type="project" value="TreeGrafter"/>
</dbReference>
<dbReference type="GO" id="GO:0008839">
    <property type="term" value="F:4-hydroxy-tetrahydrodipicolinate reductase"/>
    <property type="evidence" value="ECO:0007669"/>
    <property type="project" value="UniProtKB-EC"/>
</dbReference>
<dbReference type="GO" id="GO:0051287">
    <property type="term" value="F:NAD binding"/>
    <property type="evidence" value="ECO:0007669"/>
    <property type="project" value="UniProtKB-UniRule"/>
</dbReference>
<dbReference type="GO" id="GO:0050661">
    <property type="term" value="F:NADP binding"/>
    <property type="evidence" value="ECO:0007669"/>
    <property type="project" value="UniProtKB-UniRule"/>
</dbReference>
<dbReference type="GO" id="GO:0016726">
    <property type="term" value="F:oxidoreductase activity, acting on CH or CH2 groups, NAD or NADP as acceptor"/>
    <property type="evidence" value="ECO:0007669"/>
    <property type="project" value="UniProtKB-UniRule"/>
</dbReference>
<dbReference type="GO" id="GO:0019877">
    <property type="term" value="P:diaminopimelate biosynthetic process"/>
    <property type="evidence" value="ECO:0007669"/>
    <property type="project" value="UniProtKB-UniRule"/>
</dbReference>
<dbReference type="GO" id="GO:0009089">
    <property type="term" value="P:lysine biosynthetic process via diaminopimelate"/>
    <property type="evidence" value="ECO:0007669"/>
    <property type="project" value="UniProtKB-UniRule"/>
</dbReference>
<dbReference type="CDD" id="cd02274">
    <property type="entry name" value="DHDPR_N"/>
    <property type="match status" value="1"/>
</dbReference>
<dbReference type="FunFam" id="3.30.360.10:FF:000009">
    <property type="entry name" value="4-hydroxy-tetrahydrodipicolinate reductase"/>
    <property type="match status" value="1"/>
</dbReference>
<dbReference type="Gene3D" id="3.30.360.10">
    <property type="entry name" value="Dihydrodipicolinate Reductase, domain 2"/>
    <property type="match status" value="1"/>
</dbReference>
<dbReference type="Gene3D" id="3.40.50.720">
    <property type="entry name" value="NAD(P)-binding Rossmann-like Domain"/>
    <property type="match status" value="1"/>
</dbReference>
<dbReference type="HAMAP" id="MF_00102">
    <property type="entry name" value="DapB"/>
    <property type="match status" value="1"/>
</dbReference>
<dbReference type="InterPro" id="IPR022663">
    <property type="entry name" value="DapB_C"/>
</dbReference>
<dbReference type="InterPro" id="IPR000846">
    <property type="entry name" value="DapB_N"/>
</dbReference>
<dbReference type="InterPro" id="IPR022664">
    <property type="entry name" value="DapB_N_CS"/>
</dbReference>
<dbReference type="InterPro" id="IPR023940">
    <property type="entry name" value="DHDPR_bac"/>
</dbReference>
<dbReference type="InterPro" id="IPR036291">
    <property type="entry name" value="NAD(P)-bd_dom_sf"/>
</dbReference>
<dbReference type="NCBIfam" id="TIGR00036">
    <property type="entry name" value="dapB"/>
    <property type="match status" value="1"/>
</dbReference>
<dbReference type="PANTHER" id="PTHR20836:SF0">
    <property type="entry name" value="4-HYDROXY-TETRAHYDRODIPICOLINATE REDUCTASE 1, CHLOROPLASTIC-RELATED"/>
    <property type="match status" value="1"/>
</dbReference>
<dbReference type="PANTHER" id="PTHR20836">
    <property type="entry name" value="DIHYDRODIPICOLINATE REDUCTASE"/>
    <property type="match status" value="1"/>
</dbReference>
<dbReference type="Pfam" id="PF05173">
    <property type="entry name" value="DapB_C"/>
    <property type="match status" value="1"/>
</dbReference>
<dbReference type="Pfam" id="PF01113">
    <property type="entry name" value="DapB_N"/>
    <property type="match status" value="1"/>
</dbReference>
<dbReference type="PIRSF" id="PIRSF000161">
    <property type="entry name" value="DHPR"/>
    <property type="match status" value="1"/>
</dbReference>
<dbReference type="SUPFAM" id="SSF55347">
    <property type="entry name" value="Glyceraldehyde-3-phosphate dehydrogenase-like, C-terminal domain"/>
    <property type="match status" value="1"/>
</dbReference>
<dbReference type="SUPFAM" id="SSF51735">
    <property type="entry name" value="NAD(P)-binding Rossmann-fold domains"/>
    <property type="match status" value="1"/>
</dbReference>
<dbReference type="PROSITE" id="PS01298">
    <property type="entry name" value="DAPB"/>
    <property type="match status" value="1"/>
</dbReference>
<sequence length="277" mass="28479">MTTTVAVVGATGRMGQLISQIVEASDEFELVASLDSKGELSDMLGADIAVDVTLPAVSQGVVEYAVAHGMNVLVGTSGWTGERITELERRITGNLAVGVVIIPNFSVGSVLATSFAQMAARFYDSIEIVEAHGASKIDSPSGTAVRTAELMSQARGSRGPVQAPHTDQRARGQQVASIPVHSLRMQGVVAKQDVVFGGNGEVLTISHDTLAPSAYEAGILLALRATRTARGVVVGLDRLIDMDGSRERATQTAPTGAASGPVDDGGPSGQAATVTSA</sequence>
<comment type="function">
    <text evidence="1">Catalyzes the conversion of 4-hydroxy-tetrahydrodipicolinate (HTPA) to tetrahydrodipicolinate.</text>
</comment>
<comment type="catalytic activity">
    <reaction evidence="1">
        <text>(S)-2,3,4,5-tetrahydrodipicolinate + NAD(+) + H2O = (2S,4S)-4-hydroxy-2,3,4,5-tetrahydrodipicolinate + NADH + H(+)</text>
        <dbReference type="Rhea" id="RHEA:35323"/>
        <dbReference type="ChEBI" id="CHEBI:15377"/>
        <dbReference type="ChEBI" id="CHEBI:15378"/>
        <dbReference type="ChEBI" id="CHEBI:16845"/>
        <dbReference type="ChEBI" id="CHEBI:57540"/>
        <dbReference type="ChEBI" id="CHEBI:57945"/>
        <dbReference type="ChEBI" id="CHEBI:67139"/>
        <dbReference type="EC" id="1.17.1.8"/>
    </reaction>
</comment>
<comment type="catalytic activity">
    <reaction evidence="1">
        <text>(S)-2,3,4,5-tetrahydrodipicolinate + NADP(+) + H2O = (2S,4S)-4-hydroxy-2,3,4,5-tetrahydrodipicolinate + NADPH + H(+)</text>
        <dbReference type="Rhea" id="RHEA:35331"/>
        <dbReference type="ChEBI" id="CHEBI:15377"/>
        <dbReference type="ChEBI" id="CHEBI:15378"/>
        <dbReference type="ChEBI" id="CHEBI:16845"/>
        <dbReference type="ChEBI" id="CHEBI:57783"/>
        <dbReference type="ChEBI" id="CHEBI:58349"/>
        <dbReference type="ChEBI" id="CHEBI:67139"/>
        <dbReference type="EC" id="1.17.1.8"/>
    </reaction>
</comment>
<comment type="pathway">
    <text evidence="1">Amino-acid biosynthesis; L-lysine biosynthesis via DAP pathway; (S)-tetrahydrodipicolinate from L-aspartate: step 4/4.</text>
</comment>
<comment type="subcellular location">
    <subcellularLocation>
        <location evidence="1">Cytoplasm</location>
    </subcellularLocation>
</comment>
<comment type="similarity">
    <text evidence="1">Belongs to the DapB family.</text>
</comment>
<comment type="caution">
    <text evidence="3">Was originally thought to be a dihydrodipicolinate reductase (DHDPR), catalyzing the conversion of dihydrodipicolinate to tetrahydrodipicolinate. However, it was shown in E.coli that the substrate of the enzymatic reaction is not dihydrodipicolinate (DHDP) but in fact (2S,4S)-4-hydroxy-2,3,4,5-tetrahydrodipicolinic acid (HTPA), the product released by the DapA-catalyzed reaction.</text>
</comment>
<reference key="1">
    <citation type="journal article" date="2008" name="J. Bacteriol.">
        <title>Genome of the actinomycete plant pathogen Clavibacter michiganensis subsp. sepedonicus suggests recent niche adaptation.</title>
        <authorList>
            <person name="Bentley S.D."/>
            <person name="Corton C."/>
            <person name="Brown S.E."/>
            <person name="Barron A."/>
            <person name="Clark L."/>
            <person name="Doggett J."/>
            <person name="Harris B."/>
            <person name="Ormond D."/>
            <person name="Quail M.A."/>
            <person name="May G."/>
            <person name="Francis D."/>
            <person name="Knudson D."/>
            <person name="Parkhill J."/>
            <person name="Ishimaru C.A."/>
        </authorList>
    </citation>
    <scope>NUCLEOTIDE SEQUENCE [LARGE SCALE GENOMIC DNA]</scope>
    <source>
        <strain>ATCC 33113 / DSM 20744 / JCM 9667 / LMG 2889 / ICMP 2535 / C-1</strain>
    </source>
</reference>
<evidence type="ECO:0000255" key="1">
    <source>
        <dbReference type="HAMAP-Rule" id="MF_00102"/>
    </source>
</evidence>
<evidence type="ECO:0000256" key="2">
    <source>
        <dbReference type="SAM" id="MobiDB-lite"/>
    </source>
</evidence>
<evidence type="ECO:0000305" key="3"/>
<protein>
    <recommendedName>
        <fullName evidence="1">4-hydroxy-tetrahydrodipicolinate reductase</fullName>
        <shortName evidence="1">HTPA reductase</shortName>
        <ecNumber evidence="1">1.17.1.8</ecNumber>
    </recommendedName>
</protein>
<name>DAPB_CLASE</name>
<feature type="chain" id="PRO_1000075672" description="4-hydroxy-tetrahydrodipicolinate reductase">
    <location>
        <begin position="1"/>
        <end position="277"/>
    </location>
</feature>
<feature type="region of interest" description="Disordered" evidence="2">
    <location>
        <begin position="245"/>
        <end position="277"/>
    </location>
</feature>
<feature type="active site" description="Proton donor/acceptor" evidence="1">
    <location>
        <position position="132"/>
    </location>
</feature>
<feature type="active site" description="Proton donor" evidence="1">
    <location>
        <position position="136"/>
    </location>
</feature>
<feature type="binding site" evidence="1">
    <location>
        <begin position="9"/>
        <end position="14"/>
    </location>
    <ligand>
        <name>NAD(+)</name>
        <dbReference type="ChEBI" id="CHEBI:57540"/>
    </ligand>
</feature>
<feature type="binding site" evidence="1">
    <location>
        <position position="37"/>
    </location>
    <ligand>
        <name>NADP(+)</name>
        <dbReference type="ChEBI" id="CHEBI:58349"/>
    </ligand>
</feature>
<feature type="binding site" evidence="1">
    <location>
        <begin position="75"/>
        <end position="77"/>
    </location>
    <ligand>
        <name>NAD(+)</name>
        <dbReference type="ChEBI" id="CHEBI:57540"/>
    </ligand>
</feature>
<feature type="binding site" evidence="1">
    <location>
        <begin position="142"/>
        <end position="143"/>
    </location>
    <ligand>
        <name>(S)-2,3,4,5-tetrahydrodipicolinate</name>
        <dbReference type="ChEBI" id="CHEBI:16845"/>
    </ligand>
</feature>
<proteinExistence type="inferred from homology"/>
<organism>
    <name type="scientific">Clavibacter sepedonicus</name>
    <name type="common">Clavibacter michiganensis subsp. sepedonicus</name>
    <dbReference type="NCBI Taxonomy" id="31964"/>
    <lineage>
        <taxon>Bacteria</taxon>
        <taxon>Bacillati</taxon>
        <taxon>Actinomycetota</taxon>
        <taxon>Actinomycetes</taxon>
        <taxon>Micrococcales</taxon>
        <taxon>Microbacteriaceae</taxon>
        <taxon>Clavibacter</taxon>
    </lineage>
</organism>
<gene>
    <name evidence="1" type="primary">dapB</name>
    <name type="ordered locus">CMS1194</name>
</gene>
<accession>B0RGX5</accession>